<accession>B1KLB9</accession>
<evidence type="ECO:0000255" key="1">
    <source>
        <dbReference type="HAMAP-Rule" id="MF_00378"/>
    </source>
</evidence>
<dbReference type="EC" id="3.1.11.6" evidence="1"/>
<dbReference type="EMBL" id="CP000961">
    <property type="protein sequence ID" value="ACA85844.1"/>
    <property type="molecule type" value="Genomic_DNA"/>
</dbReference>
<dbReference type="RefSeq" id="WP_012324190.1">
    <property type="nucleotide sequence ID" value="NC_010506.1"/>
</dbReference>
<dbReference type="SMR" id="B1KLB9"/>
<dbReference type="STRING" id="392500.Swoo_1558"/>
<dbReference type="KEGG" id="swd:Swoo_1558"/>
<dbReference type="eggNOG" id="COG1570">
    <property type="taxonomic scope" value="Bacteria"/>
</dbReference>
<dbReference type="HOGENOM" id="CLU_023625_3_1_6"/>
<dbReference type="Proteomes" id="UP000002168">
    <property type="component" value="Chromosome"/>
</dbReference>
<dbReference type="GO" id="GO:0005737">
    <property type="term" value="C:cytoplasm"/>
    <property type="evidence" value="ECO:0007669"/>
    <property type="project" value="UniProtKB-SubCell"/>
</dbReference>
<dbReference type="GO" id="GO:0009318">
    <property type="term" value="C:exodeoxyribonuclease VII complex"/>
    <property type="evidence" value="ECO:0007669"/>
    <property type="project" value="InterPro"/>
</dbReference>
<dbReference type="GO" id="GO:0008855">
    <property type="term" value="F:exodeoxyribonuclease VII activity"/>
    <property type="evidence" value="ECO:0007669"/>
    <property type="project" value="UniProtKB-UniRule"/>
</dbReference>
<dbReference type="GO" id="GO:0003676">
    <property type="term" value="F:nucleic acid binding"/>
    <property type="evidence" value="ECO:0007669"/>
    <property type="project" value="InterPro"/>
</dbReference>
<dbReference type="GO" id="GO:0006308">
    <property type="term" value="P:DNA catabolic process"/>
    <property type="evidence" value="ECO:0007669"/>
    <property type="project" value="UniProtKB-UniRule"/>
</dbReference>
<dbReference type="CDD" id="cd04489">
    <property type="entry name" value="ExoVII_LU_OBF"/>
    <property type="match status" value="1"/>
</dbReference>
<dbReference type="HAMAP" id="MF_00378">
    <property type="entry name" value="Exonuc_7_L"/>
    <property type="match status" value="1"/>
</dbReference>
<dbReference type="InterPro" id="IPR003753">
    <property type="entry name" value="Exonuc_VII_L"/>
</dbReference>
<dbReference type="InterPro" id="IPR020579">
    <property type="entry name" value="Exonuc_VII_lsu_C"/>
</dbReference>
<dbReference type="InterPro" id="IPR025824">
    <property type="entry name" value="OB-fold_nuc-bd_dom"/>
</dbReference>
<dbReference type="NCBIfam" id="TIGR00237">
    <property type="entry name" value="xseA"/>
    <property type="match status" value="1"/>
</dbReference>
<dbReference type="PANTHER" id="PTHR30008">
    <property type="entry name" value="EXODEOXYRIBONUCLEASE 7 LARGE SUBUNIT"/>
    <property type="match status" value="1"/>
</dbReference>
<dbReference type="PANTHER" id="PTHR30008:SF0">
    <property type="entry name" value="EXODEOXYRIBONUCLEASE 7 LARGE SUBUNIT"/>
    <property type="match status" value="1"/>
</dbReference>
<dbReference type="Pfam" id="PF02601">
    <property type="entry name" value="Exonuc_VII_L"/>
    <property type="match status" value="1"/>
</dbReference>
<dbReference type="Pfam" id="PF13742">
    <property type="entry name" value="tRNA_anti_2"/>
    <property type="match status" value="1"/>
</dbReference>
<proteinExistence type="inferred from homology"/>
<reference key="1">
    <citation type="submission" date="2008-02" db="EMBL/GenBank/DDBJ databases">
        <title>Complete sequence of Shewanella woodyi ATCC 51908.</title>
        <authorList>
            <consortium name="US DOE Joint Genome Institute"/>
            <person name="Copeland A."/>
            <person name="Lucas S."/>
            <person name="Lapidus A."/>
            <person name="Glavina del Rio T."/>
            <person name="Dalin E."/>
            <person name="Tice H."/>
            <person name="Bruce D."/>
            <person name="Goodwin L."/>
            <person name="Pitluck S."/>
            <person name="Sims D."/>
            <person name="Brettin T."/>
            <person name="Detter J.C."/>
            <person name="Han C."/>
            <person name="Kuske C.R."/>
            <person name="Schmutz J."/>
            <person name="Larimer F."/>
            <person name="Land M."/>
            <person name="Hauser L."/>
            <person name="Kyrpides N."/>
            <person name="Lykidis A."/>
            <person name="Zhao J.-S."/>
            <person name="Richardson P."/>
        </authorList>
    </citation>
    <scope>NUCLEOTIDE SEQUENCE [LARGE SCALE GENOMIC DNA]</scope>
    <source>
        <strain>ATCC 51908 / MS32</strain>
    </source>
</reference>
<keyword id="KW-0963">Cytoplasm</keyword>
<keyword id="KW-0269">Exonuclease</keyword>
<keyword id="KW-0378">Hydrolase</keyword>
<keyword id="KW-0540">Nuclease</keyword>
<keyword id="KW-1185">Reference proteome</keyword>
<comment type="function">
    <text evidence="1">Bidirectionally degrades single-stranded DNA into large acid-insoluble oligonucleotides, which are then degraded further into small acid-soluble oligonucleotides.</text>
</comment>
<comment type="catalytic activity">
    <reaction evidence="1">
        <text>Exonucleolytic cleavage in either 5'- to 3'- or 3'- to 5'-direction to yield nucleoside 5'-phosphates.</text>
        <dbReference type="EC" id="3.1.11.6"/>
    </reaction>
</comment>
<comment type="subunit">
    <text evidence="1">Heterooligomer composed of large and small subunits.</text>
</comment>
<comment type="subcellular location">
    <subcellularLocation>
        <location evidence="1">Cytoplasm</location>
    </subcellularLocation>
</comment>
<comment type="similarity">
    <text evidence="1">Belongs to the XseA family.</text>
</comment>
<organism>
    <name type="scientific">Shewanella woodyi (strain ATCC 51908 / MS32)</name>
    <dbReference type="NCBI Taxonomy" id="392500"/>
    <lineage>
        <taxon>Bacteria</taxon>
        <taxon>Pseudomonadati</taxon>
        <taxon>Pseudomonadota</taxon>
        <taxon>Gammaproteobacteria</taxon>
        <taxon>Alteromonadales</taxon>
        <taxon>Shewanellaceae</taxon>
        <taxon>Shewanella</taxon>
    </lineage>
</organism>
<protein>
    <recommendedName>
        <fullName evidence="1">Exodeoxyribonuclease 7 large subunit</fullName>
        <ecNumber evidence="1">3.1.11.6</ecNumber>
    </recommendedName>
    <alternativeName>
        <fullName evidence="1">Exodeoxyribonuclease VII large subunit</fullName>
        <shortName evidence="1">Exonuclease VII large subunit</shortName>
    </alternativeName>
</protein>
<name>EX7L_SHEWM</name>
<feature type="chain" id="PRO_1000122088" description="Exodeoxyribonuclease 7 large subunit">
    <location>
        <begin position="1"/>
        <end position="442"/>
    </location>
</feature>
<gene>
    <name evidence="1" type="primary">xseA</name>
    <name type="ordered locus">Swoo_1558</name>
</gene>
<sequence length="442" mass="49163">MKMPKNNVYTVSQLNGEVRQLLEGELGRVWLNAEISNFSSPSSGHWYLTLKDHFAQIRCAMFKGKNRTVTFRPANGQQVLVKGSISVYEPRGDYQLIIESMLPAGDGMLAQQYEALKMKLAAEGLFATDTKRPLPTNINKIGVITSATGAALKDVLHVLARRDPSIEVVVYPTQVQGDNAAKLICRAIELANARQEVDVLLLTRGGGSLEDLWCFNSEDLAHCIYNSALPVVSAVGHEVDTSISDYVADVRAPTPSAGAELLSKDADDKAHKLIAGLSRLKQSWQHYQLKTVQKATALENRLQRQDPKRRLEQFEQSFDEMQLRLNAALNSRIHKLALKQQNLSHRLSQQSPEHRLTLEAKRLDYLTTRLNEGIKDKLHDVELSLKNSAHQLQTVSPLATLSRGYSITQDESGKVLLNAKDAKTGDLLTTRLLEGELRSKVV</sequence>